<evidence type="ECO:0000255" key="1"/>
<evidence type="ECO:0000256" key="2">
    <source>
        <dbReference type="SAM" id="MobiDB-lite"/>
    </source>
</evidence>
<evidence type="ECO:0000269" key="3">
    <source>
    </source>
</evidence>
<evidence type="ECO:0000269" key="4">
    <source>
    </source>
</evidence>
<evidence type="ECO:0000305" key="5"/>
<evidence type="ECO:0000305" key="6">
    <source>
    </source>
</evidence>
<evidence type="ECO:0007744" key="7">
    <source>
    </source>
</evidence>
<evidence type="ECO:0007744" key="8">
    <source>
    </source>
</evidence>
<evidence type="ECO:0007744" key="9">
    <source>
    </source>
</evidence>
<keyword id="KW-0961">Cell wall biogenesis/degradation</keyword>
<keyword id="KW-0328">Glycosyltransferase</keyword>
<keyword id="KW-0333">Golgi apparatus</keyword>
<keyword id="KW-0472">Membrane</keyword>
<keyword id="KW-0597">Phosphoprotein</keyword>
<keyword id="KW-1185">Reference proteome</keyword>
<keyword id="KW-0808">Transferase</keyword>
<keyword id="KW-0812">Transmembrane</keyword>
<keyword id="KW-1133">Transmembrane helix</keyword>
<proteinExistence type="evidence at protein level"/>
<organism>
    <name type="scientific">Arabidopsis thaliana</name>
    <name type="common">Mouse-ear cress</name>
    <dbReference type="NCBI Taxonomy" id="3702"/>
    <lineage>
        <taxon>Eukaryota</taxon>
        <taxon>Viridiplantae</taxon>
        <taxon>Streptophyta</taxon>
        <taxon>Embryophyta</taxon>
        <taxon>Tracheophyta</taxon>
        <taxon>Spermatophyta</taxon>
        <taxon>Magnoliopsida</taxon>
        <taxon>eudicotyledons</taxon>
        <taxon>Gunneridae</taxon>
        <taxon>Pentapetalae</taxon>
        <taxon>rosids</taxon>
        <taxon>malvids</taxon>
        <taxon>Brassicales</taxon>
        <taxon>Brassicaceae</taxon>
        <taxon>Camelineae</taxon>
        <taxon>Arabidopsis</taxon>
    </lineage>
</organism>
<reference key="1">
    <citation type="journal article" date="2001" name="Genes Dev.">
        <title>KOJAK encodes a cellulose synthase-like protein required for root hair cell morphogenesis in Arabidopsis.</title>
        <authorList>
            <person name="Favery B."/>
            <person name="Ryan E."/>
            <person name="Foreman J."/>
            <person name="Linstead P."/>
            <person name="Boudonck K."/>
            <person name="Steer M."/>
            <person name="Shaw P."/>
            <person name="Dolan L."/>
        </authorList>
    </citation>
    <scope>NUCLEOTIDE SEQUENCE [MRNA]</scope>
    <scope>SUBCELLULAR LOCATION</scope>
    <scope>TISSUE SPECIFICITY</scope>
    <scope>MUTAGENESIS OF GLU-829</scope>
    <source>
        <strain>cv. Landsberg erecta</strain>
    </source>
</reference>
<reference key="2">
    <citation type="journal article" date="2001" name="Plant Physiol.">
        <title>AtCSLD3, a cellulose synthase-like gene important for root hair growth in arabidopsis.</title>
        <authorList>
            <person name="Wang X."/>
            <person name="Cnops G."/>
            <person name="Vanderhaeghen R."/>
            <person name="de Block S."/>
            <person name="van Montagu M."/>
            <person name="van Lijsebettens M."/>
        </authorList>
    </citation>
    <scope>NUCLEOTIDE SEQUENCE [GENOMIC DNA]</scope>
    <scope>FUNCTION</scope>
    <scope>TISSUE SPECIFICITY</scope>
    <source>
        <strain>cv. Columbia</strain>
    </source>
</reference>
<reference key="3">
    <citation type="journal article" date="2000" name="Nature">
        <title>Sequence and analysis of chromosome 3 of the plant Arabidopsis thaliana.</title>
        <authorList>
            <person name="Salanoubat M."/>
            <person name="Lemcke K."/>
            <person name="Rieger M."/>
            <person name="Ansorge W."/>
            <person name="Unseld M."/>
            <person name="Fartmann B."/>
            <person name="Valle G."/>
            <person name="Bloecker H."/>
            <person name="Perez-Alonso M."/>
            <person name="Obermaier B."/>
            <person name="Delseny M."/>
            <person name="Boutry M."/>
            <person name="Grivell L.A."/>
            <person name="Mache R."/>
            <person name="Puigdomenech P."/>
            <person name="De Simone V."/>
            <person name="Choisne N."/>
            <person name="Artiguenave F."/>
            <person name="Robert C."/>
            <person name="Brottier P."/>
            <person name="Wincker P."/>
            <person name="Cattolico L."/>
            <person name="Weissenbach J."/>
            <person name="Saurin W."/>
            <person name="Quetier F."/>
            <person name="Schaefer M."/>
            <person name="Mueller-Auer S."/>
            <person name="Gabel C."/>
            <person name="Fuchs M."/>
            <person name="Benes V."/>
            <person name="Wurmbach E."/>
            <person name="Drzonek H."/>
            <person name="Erfle H."/>
            <person name="Jordan N."/>
            <person name="Bangert S."/>
            <person name="Wiedelmann R."/>
            <person name="Kranz H."/>
            <person name="Voss H."/>
            <person name="Holland R."/>
            <person name="Brandt P."/>
            <person name="Nyakatura G."/>
            <person name="Vezzi A."/>
            <person name="D'Angelo M."/>
            <person name="Pallavicini A."/>
            <person name="Toppo S."/>
            <person name="Simionati B."/>
            <person name="Conrad A."/>
            <person name="Hornischer K."/>
            <person name="Kauer G."/>
            <person name="Loehnert T.-H."/>
            <person name="Nordsiek G."/>
            <person name="Reichelt J."/>
            <person name="Scharfe M."/>
            <person name="Schoen O."/>
            <person name="Bargues M."/>
            <person name="Terol J."/>
            <person name="Climent J."/>
            <person name="Navarro P."/>
            <person name="Collado C."/>
            <person name="Perez-Perez A."/>
            <person name="Ottenwaelder B."/>
            <person name="Duchemin D."/>
            <person name="Cooke R."/>
            <person name="Laudie M."/>
            <person name="Berger-Llauro C."/>
            <person name="Purnelle B."/>
            <person name="Masuy D."/>
            <person name="de Haan M."/>
            <person name="Maarse A.C."/>
            <person name="Alcaraz J.-P."/>
            <person name="Cottet A."/>
            <person name="Casacuberta E."/>
            <person name="Monfort A."/>
            <person name="Argiriou A."/>
            <person name="Flores M."/>
            <person name="Liguori R."/>
            <person name="Vitale D."/>
            <person name="Mannhaupt G."/>
            <person name="Haase D."/>
            <person name="Schoof H."/>
            <person name="Rudd S."/>
            <person name="Zaccaria P."/>
            <person name="Mewes H.-W."/>
            <person name="Mayer K.F.X."/>
            <person name="Kaul S."/>
            <person name="Town C.D."/>
            <person name="Koo H.L."/>
            <person name="Tallon L.J."/>
            <person name="Jenkins J."/>
            <person name="Rooney T."/>
            <person name="Rizzo M."/>
            <person name="Walts A."/>
            <person name="Utterback T."/>
            <person name="Fujii C.Y."/>
            <person name="Shea T.P."/>
            <person name="Creasy T.H."/>
            <person name="Haas B."/>
            <person name="Maiti R."/>
            <person name="Wu D."/>
            <person name="Peterson J."/>
            <person name="Van Aken S."/>
            <person name="Pai G."/>
            <person name="Militscher J."/>
            <person name="Sellers P."/>
            <person name="Gill J.E."/>
            <person name="Feldblyum T.V."/>
            <person name="Preuss D."/>
            <person name="Lin X."/>
            <person name="Nierman W.C."/>
            <person name="Salzberg S.L."/>
            <person name="White O."/>
            <person name="Venter J.C."/>
            <person name="Fraser C.M."/>
            <person name="Kaneko T."/>
            <person name="Nakamura Y."/>
            <person name="Sato S."/>
            <person name="Kato T."/>
            <person name="Asamizu E."/>
            <person name="Sasamoto S."/>
            <person name="Kimura T."/>
            <person name="Idesawa K."/>
            <person name="Kawashima K."/>
            <person name="Kishida Y."/>
            <person name="Kiyokawa C."/>
            <person name="Kohara M."/>
            <person name="Matsumoto M."/>
            <person name="Matsuno A."/>
            <person name="Muraki A."/>
            <person name="Nakayama S."/>
            <person name="Nakazaki N."/>
            <person name="Shinpo S."/>
            <person name="Takeuchi C."/>
            <person name="Wada T."/>
            <person name="Watanabe A."/>
            <person name="Yamada M."/>
            <person name="Yasuda M."/>
            <person name="Tabata S."/>
        </authorList>
    </citation>
    <scope>NUCLEOTIDE SEQUENCE [LARGE SCALE GENOMIC DNA]</scope>
    <source>
        <strain>cv. Columbia</strain>
    </source>
</reference>
<reference key="4">
    <citation type="journal article" date="2017" name="Plant J.">
        <title>Araport11: a complete reannotation of the Arabidopsis thaliana reference genome.</title>
        <authorList>
            <person name="Cheng C.Y."/>
            <person name="Krishnakumar V."/>
            <person name="Chan A.P."/>
            <person name="Thibaud-Nissen F."/>
            <person name="Schobel S."/>
            <person name="Town C.D."/>
        </authorList>
    </citation>
    <scope>GENOME REANNOTATION</scope>
    <source>
        <strain>cv. Columbia</strain>
    </source>
</reference>
<reference key="5">
    <citation type="journal article" date="2003" name="Science">
        <title>Empirical analysis of transcriptional activity in the Arabidopsis genome.</title>
        <authorList>
            <person name="Yamada K."/>
            <person name="Lim J."/>
            <person name="Dale J.M."/>
            <person name="Chen H."/>
            <person name="Shinn P."/>
            <person name="Palm C.J."/>
            <person name="Southwick A.M."/>
            <person name="Wu H.C."/>
            <person name="Kim C.J."/>
            <person name="Nguyen M."/>
            <person name="Pham P.K."/>
            <person name="Cheuk R.F."/>
            <person name="Karlin-Newmann G."/>
            <person name="Liu S.X."/>
            <person name="Lam B."/>
            <person name="Sakano H."/>
            <person name="Wu T."/>
            <person name="Yu G."/>
            <person name="Miranda M."/>
            <person name="Quach H.L."/>
            <person name="Tripp M."/>
            <person name="Chang C.H."/>
            <person name="Lee J.M."/>
            <person name="Toriumi M.J."/>
            <person name="Chan M.M."/>
            <person name="Tang C.C."/>
            <person name="Onodera C.S."/>
            <person name="Deng J.M."/>
            <person name="Akiyama K."/>
            <person name="Ansari Y."/>
            <person name="Arakawa T."/>
            <person name="Banh J."/>
            <person name="Banno F."/>
            <person name="Bowser L."/>
            <person name="Brooks S.Y."/>
            <person name="Carninci P."/>
            <person name="Chao Q."/>
            <person name="Choy N."/>
            <person name="Enju A."/>
            <person name="Goldsmith A.D."/>
            <person name="Gurjal M."/>
            <person name="Hansen N.F."/>
            <person name="Hayashizaki Y."/>
            <person name="Johnson-Hopson C."/>
            <person name="Hsuan V.W."/>
            <person name="Iida K."/>
            <person name="Karnes M."/>
            <person name="Khan S."/>
            <person name="Koesema E."/>
            <person name="Ishida J."/>
            <person name="Jiang P.X."/>
            <person name="Jones T."/>
            <person name="Kawai J."/>
            <person name="Kamiya A."/>
            <person name="Meyers C."/>
            <person name="Nakajima M."/>
            <person name="Narusaka M."/>
            <person name="Seki M."/>
            <person name="Sakurai T."/>
            <person name="Satou M."/>
            <person name="Tamse R."/>
            <person name="Vaysberg M."/>
            <person name="Wallender E.K."/>
            <person name="Wong C."/>
            <person name="Yamamura Y."/>
            <person name="Yuan S."/>
            <person name="Shinozaki K."/>
            <person name="Davis R.W."/>
            <person name="Theologis A."/>
            <person name="Ecker J.R."/>
        </authorList>
    </citation>
    <scope>NUCLEOTIDE SEQUENCE [LARGE SCALE MRNA]</scope>
    <source>
        <strain>cv. Columbia</strain>
    </source>
</reference>
<reference key="6">
    <citation type="journal article" date="2000" name="Plant Physiol.">
        <title>The cellulose synthase superfamily.</title>
        <authorList>
            <person name="Richmond T.A."/>
            <person name="Somerville C.R."/>
        </authorList>
    </citation>
    <scope>GENE FAMILY</scope>
    <scope>NOMENCLATURE</scope>
</reference>
<reference key="7">
    <citation type="journal article" date="2003" name="Mol. Cell. Proteomics">
        <title>Large-scale analysis of in vivo phosphorylated membrane proteins by immobilized metal ion affinity chromatography and mass spectrometry.</title>
        <authorList>
            <person name="Nuehse T.S."/>
            <person name="Stensballe A."/>
            <person name="Jensen O.N."/>
            <person name="Peck S.C."/>
        </authorList>
    </citation>
    <scope>PHOSPHORYLATION [LARGE SCALE ANALYSIS] AT SER-755</scope>
    <scope>IDENTIFICATION BY MASS SPECTROMETRY [LARGE SCALE ANALYSIS]</scope>
    <source>
        <strain>cv. La-0</strain>
    </source>
</reference>
<reference key="8">
    <citation type="journal article" date="2004" name="Plant Cell">
        <title>Phosphoproteomics of the Arabidopsis plasma membrane and a new phosphorylation site database.</title>
        <authorList>
            <person name="Nuehse T.S."/>
            <person name="Stensballe A."/>
            <person name="Jensen O.N."/>
            <person name="Peck S.C."/>
        </authorList>
    </citation>
    <scope>PHOSPHORYLATION [LARGE SCALE ANALYSIS] AT SER-755</scope>
    <scope>IDENTIFICATION BY MASS SPECTROMETRY [LARGE SCALE ANALYSIS]</scope>
</reference>
<reference key="9">
    <citation type="journal article" date="2009" name="J. Proteomics">
        <title>Phosphoproteomic analysis of nuclei-enriched fractions from Arabidopsis thaliana.</title>
        <authorList>
            <person name="Jones A.M.E."/>
            <person name="MacLean D."/>
            <person name="Studholme D.J."/>
            <person name="Serna-Sanz A."/>
            <person name="Andreasson E."/>
            <person name="Rathjen J.P."/>
            <person name="Peck S.C."/>
        </authorList>
    </citation>
    <scope>PHOSPHORYLATION [LARGE SCALE ANALYSIS] AT SER-755</scope>
    <scope>IDENTIFICATION BY MASS SPECTROMETRY [LARGE SCALE ANALYSIS]</scope>
    <source>
        <strain>cv. Columbia</strain>
    </source>
</reference>
<reference key="10">
    <citation type="journal article" date="2009" name="Plant Physiol.">
        <title>Large-scale Arabidopsis phosphoproteome profiling reveals novel chloroplast kinase substrates and phosphorylation networks.</title>
        <authorList>
            <person name="Reiland S."/>
            <person name="Messerli G."/>
            <person name="Baerenfaller K."/>
            <person name="Gerrits B."/>
            <person name="Endler A."/>
            <person name="Grossmann J."/>
            <person name="Gruissem W."/>
            <person name="Baginsky S."/>
        </authorList>
    </citation>
    <scope>IDENTIFICATION BY MASS SPECTROMETRY [LARGE SCALE ANALYSIS]</scope>
</reference>
<protein>
    <recommendedName>
        <fullName>Cellulose synthase-like protein D3</fullName>
        <shortName>AtCslD3</shortName>
        <ecNumber>2.4.1.-</ecNumber>
    </recommendedName>
    <alternativeName>
        <fullName>Protein KOJAK</fullName>
    </alternativeName>
</protein>
<name>CSLD3_ARATH</name>
<sequence>MASNNHFMNSRSNLSTNSDAAEAERHQQPVSNSVTFARRTPSGRYVNYSRDDLDSELGSVDLTGYSVHIPPTPDNQPMDPSISQKVEEQYVSNSLFTGGFNSVTRAHLMEKVIDTETSHPQMAGAKGSSCAVPGCDVKVMSDERGQDLLPCECDFKICRDCFMDAVKTGGMCPGCKEPYRNTDLADFADNNKQQRPMLPPPAGGSKMDRRLSLMKSTKSGLMRSQTGDFDHNRWLFETSGTYGFGNAFWTKDGNFGSDKDGNGHGMGPQDLMSRPWRPLTRKLQIPAAVISPYRLLILIRIVVLALFLMWRIKHKNPDAIWLWGMSVVCELWFALSWLLDQLPKLCPINRATDLNVLKEKFETPTPSNPTGKSDLPGLDMFVSTADPEKEPPLVTSNTILSILAADYPVEKLACYVSDDGGALLTFEAMAEAASFANMWVPFCRKHNIEPRNPDSYFSLKRDPYKNKVKADFVKDRRRVKREYDEFKVRINSLPDSIRRRSDAYHAREEIKAMKLQRQNRDEEIVEPVKIPKATWMADGTHWPGTWINSGPDHSRSDHAGIIQVMLKPPSDEPLHGVSEGFLDLTDVDIRLPLLVYVSREKRPGYDHNKKAGAMNALVRASAIMSNGPFILNLDCDHYIYNSQALREGMCFMMDRGGDRLCYVQFPQRFEGIDPSDRYANHNTVFFDVNMRALDGLMGPVYVGTGCLFRRIALYGFDPPRAKEHHPGFCSCCFSRKKKKSRVPEENRSLRMGGDSDDDEEMNLSLVPKKFGNSTFLIDSIPVAEFQGRPLADHPAVQNGRPPGALTIPRELLDASTVAEAIAVISCWYEDKTEWGSRIGWIYGSVTEDVVTGYRMHNRGWKSVYCVTKRDAFRGTAPINLTDRLHQVLRWATGSVEIFFSRNNAFFASPRMKILQRIAYLNVGIYPFTSFFLIVYCFLPALSLFSGQFIVQTLNVTFLVYLLIISITLCLLALLEIKWSGISLEEWWRNEQFWLIGGTSAHLAAVIQGLLKVVAGIEISFTLTSKSGGEDVDDEFADLYIVKWTSLMIPPITIMMVNLIAIAVGFSRTIYSVIPQWSKLIGGVFFSFWVLAHLYPFAKGLMGRRGRTPTIVYVWSGLVAITISLLWVAINPPAGSTQIGGSFTFP</sequence>
<gene>
    <name type="primary">CSLD3</name>
    <name type="synonym">KJK</name>
    <name type="ordered locus">At3g03050</name>
    <name type="ORF">T17B22.26</name>
</gene>
<feature type="chain" id="PRO_0000319348" description="Cellulose synthase-like protein D3">
    <location>
        <begin position="1"/>
        <end position="1145"/>
    </location>
</feature>
<feature type="transmembrane region" description="Helical" evidence="1">
    <location>
        <begin position="289"/>
        <end position="309"/>
    </location>
</feature>
<feature type="transmembrane region" description="Helical" evidence="1">
    <location>
        <begin position="319"/>
        <end position="339"/>
    </location>
</feature>
<feature type="transmembrane region" description="Helical" evidence="1">
    <location>
        <begin position="930"/>
        <end position="950"/>
    </location>
</feature>
<feature type="transmembrane region" description="Helical" evidence="1">
    <location>
        <begin position="956"/>
        <end position="976"/>
    </location>
</feature>
<feature type="transmembrane region" description="Helical" evidence="1">
    <location>
        <begin position="1002"/>
        <end position="1022"/>
    </location>
</feature>
<feature type="transmembrane region" description="Helical" evidence="1">
    <location>
        <begin position="1045"/>
        <end position="1065"/>
    </location>
</feature>
<feature type="transmembrane region" description="Helical" evidence="1">
    <location>
        <begin position="1079"/>
        <end position="1099"/>
    </location>
</feature>
<feature type="transmembrane region" description="Helical" evidence="1">
    <location>
        <begin position="1109"/>
        <end position="1129"/>
    </location>
</feature>
<feature type="region of interest" description="Disordered" evidence="2">
    <location>
        <begin position="1"/>
        <end position="38"/>
    </location>
</feature>
<feature type="region of interest" description="Disordered" evidence="2">
    <location>
        <begin position="189"/>
        <end position="208"/>
    </location>
</feature>
<feature type="compositionally biased region" description="Polar residues" evidence="2">
    <location>
        <begin position="1"/>
        <end position="19"/>
    </location>
</feature>
<feature type="active site" evidence="1">
    <location>
        <position position="419"/>
    </location>
</feature>
<feature type="active site" evidence="1">
    <location>
        <position position="848"/>
    </location>
</feature>
<feature type="modified residue" description="Phosphoserine" evidence="7 8 9">
    <location>
        <position position="755"/>
    </location>
</feature>
<feature type="mutagenesis site" description="In kjk-3; reduction of root hair growth." evidence="3">
    <original>E</original>
    <variation>K</variation>
    <location>
        <position position="829"/>
    </location>
</feature>
<comment type="function">
    <text evidence="4">Thought to be a Golgi-localized beta-glycan synthase that polymerize the backbones of noncellulosic polysaccharides (hemicelluloses) of plant cell wall. Required for synthesis of a cell wall polysaccharide essential for root hair elongation, but not initiation. May be the functional ortholog of rice CSLD1.</text>
</comment>
<comment type="subcellular location">
    <subcellularLocation>
        <location evidence="6">Golgi apparatus membrane</location>
        <topology evidence="6">Multi-pass membrane protein</topology>
    </subcellularLocation>
</comment>
<comment type="tissue specificity">
    <text evidence="3 4">Preferentially expressed in root hair cells. Expressed in roots, leaves, stems, flowers and siliques.</text>
</comment>
<comment type="similarity">
    <text evidence="5">Belongs to the glycosyltransferase 2 family. Plant cellulose synthase-like D subfamily.</text>
</comment>
<accession>Q9M9M4</accession>
<dbReference type="EC" id="2.4.1.-"/>
<dbReference type="EMBL" id="AF232907">
    <property type="protein sequence ID" value="AAG60543.1"/>
    <property type="molecule type" value="mRNA"/>
</dbReference>
<dbReference type="EMBL" id="AJ297948">
    <property type="protein sequence ID" value="CAC82909.1"/>
    <property type="molecule type" value="Genomic_DNA"/>
</dbReference>
<dbReference type="EMBL" id="AC012328">
    <property type="protein sequence ID" value="AAF26119.1"/>
    <property type="molecule type" value="Genomic_DNA"/>
</dbReference>
<dbReference type="EMBL" id="CP002686">
    <property type="protein sequence ID" value="AEE73896.1"/>
    <property type="molecule type" value="Genomic_DNA"/>
</dbReference>
<dbReference type="EMBL" id="AF360180">
    <property type="protein sequence ID" value="AAK25890.1"/>
    <property type="molecule type" value="mRNA"/>
</dbReference>
<dbReference type="EMBL" id="AY039996">
    <property type="protein sequence ID" value="AAK64073.1"/>
    <property type="molecule type" value="mRNA"/>
</dbReference>
<dbReference type="RefSeq" id="NP_186955.1">
    <property type="nucleotide sequence ID" value="NM_111175.3"/>
</dbReference>
<dbReference type="SMR" id="Q9M9M4"/>
<dbReference type="BioGRID" id="6481">
    <property type="interactions" value="2"/>
</dbReference>
<dbReference type="FunCoup" id="Q9M9M4">
    <property type="interactions" value="612"/>
</dbReference>
<dbReference type="IntAct" id="Q9M9M4">
    <property type="interactions" value="2"/>
</dbReference>
<dbReference type="STRING" id="3702.Q9M9M4"/>
<dbReference type="CAZy" id="GT2">
    <property type="family name" value="Glycosyltransferase Family 2"/>
</dbReference>
<dbReference type="GlyGen" id="Q9M9M4">
    <property type="glycosylation" value="2 sites"/>
</dbReference>
<dbReference type="iPTMnet" id="Q9M9M4"/>
<dbReference type="PaxDb" id="3702-AT3G03050.1"/>
<dbReference type="ProteomicsDB" id="220366"/>
<dbReference type="EnsemblPlants" id="AT3G03050.1">
    <property type="protein sequence ID" value="AT3G03050.1"/>
    <property type="gene ID" value="AT3G03050"/>
</dbReference>
<dbReference type="GeneID" id="821148"/>
<dbReference type="Gramene" id="AT3G03050.1">
    <property type="protein sequence ID" value="AT3G03050.1"/>
    <property type="gene ID" value="AT3G03050"/>
</dbReference>
<dbReference type="KEGG" id="ath:AT3G03050"/>
<dbReference type="Araport" id="AT3G03050"/>
<dbReference type="TAIR" id="AT3G03050">
    <property type="gene designation" value="CSLD3"/>
</dbReference>
<dbReference type="eggNOG" id="ENOG502QU14">
    <property type="taxonomic scope" value="Eukaryota"/>
</dbReference>
<dbReference type="HOGENOM" id="CLU_001418_0_2_1"/>
<dbReference type="InParanoid" id="Q9M9M4"/>
<dbReference type="OMA" id="IWPKGGN"/>
<dbReference type="OrthoDB" id="72851at2759"/>
<dbReference type="PhylomeDB" id="Q9M9M4"/>
<dbReference type="BioCyc" id="ARA:AT3G03050-MONOMER"/>
<dbReference type="BRENDA" id="2.4.1.12">
    <property type="organism ID" value="399"/>
</dbReference>
<dbReference type="PRO" id="PR:Q9M9M4"/>
<dbReference type="Proteomes" id="UP000006548">
    <property type="component" value="Chromosome 3"/>
</dbReference>
<dbReference type="ExpressionAtlas" id="Q9M9M4">
    <property type="expression patterns" value="baseline and differential"/>
</dbReference>
<dbReference type="GO" id="GO:0005783">
    <property type="term" value="C:endoplasmic reticulum"/>
    <property type="evidence" value="ECO:0000314"/>
    <property type="project" value="TAIR"/>
</dbReference>
<dbReference type="GO" id="GO:0005768">
    <property type="term" value="C:endosome"/>
    <property type="evidence" value="ECO:0007005"/>
    <property type="project" value="TAIR"/>
</dbReference>
<dbReference type="GO" id="GO:0005794">
    <property type="term" value="C:Golgi apparatus"/>
    <property type="evidence" value="ECO:0007005"/>
    <property type="project" value="TAIR"/>
</dbReference>
<dbReference type="GO" id="GO:0000139">
    <property type="term" value="C:Golgi membrane"/>
    <property type="evidence" value="ECO:0007669"/>
    <property type="project" value="UniProtKB-SubCell"/>
</dbReference>
<dbReference type="GO" id="GO:0005886">
    <property type="term" value="C:plasma membrane"/>
    <property type="evidence" value="ECO:0007005"/>
    <property type="project" value="TAIR"/>
</dbReference>
<dbReference type="GO" id="GO:0005802">
    <property type="term" value="C:trans-Golgi network"/>
    <property type="evidence" value="ECO:0007005"/>
    <property type="project" value="TAIR"/>
</dbReference>
<dbReference type="GO" id="GO:0016760">
    <property type="term" value="F:cellulose synthase (UDP-forming) activity"/>
    <property type="evidence" value="ECO:0007669"/>
    <property type="project" value="InterPro"/>
</dbReference>
<dbReference type="GO" id="GO:0051753">
    <property type="term" value="F:mannan synthase activity"/>
    <property type="evidence" value="ECO:0000314"/>
    <property type="project" value="TAIR"/>
</dbReference>
<dbReference type="GO" id="GO:0071555">
    <property type="term" value="P:cell wall organization"/>
    <property type="evidence" value="ECO:0007669"/>
    <property type="project" value="UniProtKB-KW"/>
</dbReference>
<dbReference type="GO" id="GO:0030244">
    <property type="term" value="P:cellulose biosynthetic process"/>
    <property type="evidence" value="ECO:0007669"/>
    <property type="project" value="InterPro"/>
</dbReference>
<dbReference type="GO" id="GO:0009409">
    <property type="term" value="P:response to cold"/>
    <property type="evidence" value="ECO:0000270"/>
    <property type="project" value="TAIR"/>
</dbReference>
<dbReference type="FunFam" id="3.30.40.10:FF:000229">
    <property type="entry name" value="Cellulose synthase-like protein D3"/>
    <property type="match status" value="1"/>
</dbReference>
<dbReference type="FunFam" id="3.90.550.10:FF:000040">
    <property type="entry name" value="cellulose synthase-like protein D3"/>
    <property type="match status" value="1"/>
</dbReference>
<dbReference type="Gene3D" id="3.90.550.10">
    <property type="entry name" value="Spore Coat Polysaccharide Biosynthesis Protein SpsA, Chain A"/>
    <property type="match status" value="1"/>
</dbReference>
<dbReference type="Gene3D" id="3.30.40.10">
    <property type="entry name" value="Zinc/RING finger domain, C3HC4 (zinc finger)"/>
    <property type="match status" value="1"/>
</dbReference>
<dbReference type="InterPro" id="IPR005150">
    <property type="entry name" value="Cellulose_synth"/>
</dbReference>
<dbReference type="InterPro" id="IPR029044">
    <property type="entry name" value="Nucleotide-diphossugar_trans"/>
</dbReference>
<dbReference type="InterPro" id="IPR013083">
    <property type="entry name" value="Znf_RING/FYVE/PHD"/>
</dbReference>
<dbReference type="PANTHER" id="PTHR13301">
    <property type="entry name" value="X-BOX TRANSCRIPTION FACTOR-RELATED"/>
    <property type="match status" value="1"/>
</dbReference>
<dbReference type="Pfam" id="PF03552">
    <property type="entry name" value="Cellulose_synt"/>
    <property type="match status" value="1"/>
</dbReference>
<dbReference type="Pfam" id="PF14570">
    <property type="entry name" value="zf-RING_4"/>
    <property type="match status" value="1"/>
</dbReference>
<dbReference type="SUPFAM" id="SSF57850">
    <property type="entry name" value="RING/U-box"/>
    <property type="match status" value="1"/>
</dbReference>